<accession>Q9UXA0</accession>
<feature type="chain" id="PRO_0000130262" description="Small ribosomal subunit protein uS3">
    <location>
        <begin position="1"/>
        <end position="229"/>
    </location>
</feature>
<feature type="domain" description="KH type-2" evidence="1">
    <location>
        <begin position="18"/>
        <end position="87"/>
    </location>
</feature>
<protein>
    <recommendedName>
        <fullName evidence="1">Small ribosomal subunit protein uS3</fullName>
    </recommendedName>
    <alternativeName>
        <fullName evidence="2">30S ribosomal protein S3</fullName>
    </alternativeName>
</protein>
<evidence type="ECO:0000255" key="1">
    <source>
        <dbReference type="HAMAP-Rule" id="MF_01309"/>
    </source>
</evidence>
<evidence type="ECO:0000305" key="2"/>
<sequence length="229" mass="25825">MPNIKRYFLEKSIVKVKIDEYLAKQYYNAEYAGVEVLKTPIGTRVIIYAGRPSMIIGRGGRNIKQLAQIFEKVFGLENPQITITNVENPELNARVMAFRLAIALEKGYHFRRAAFISMRRIMNAGALGAEIIISGKLTTERARYEKLKEGIVYKSGQQLEKMIDRAIAIAMLKPGIFGVEVVITKPLKIEDKINLKESPSVPQEVSVTNVTFIEESSQKSEEKSEGEKE</sequence>
<comment type="function">
    <text evidence="1">Binds the lower part of the 30S subunit head.</text>
</comment>
<comment type="subunit">
    <text evidence="1">Part of the 30S ribosomal subunit.</text>
</comment>
<comment type="similarity">
    <text evidence="1">Belongs to the universal ribosomal protein uS3 family.</text>
</comment>
<keyword id="KW-0002">3D-structure</keyword>
<keyword id="KW-1185">Reference proteome</keyword>
<keyword id="KW-0687">Ribonucleoprotein</keyword>
<keyword id="KW-0689">Ribosomal protein</keyword>
<keyword id="KW-0694">RNA-binding</keyword>
<keyword id="KW-0699">rRNA-binding</keyword>
<organism>
    <name type="scientific">Saccharolobus solfataricus (strain ATCC 35092 / DSM 1617 / JCM 11322 / P2)</name>
    <name type="common">Sulfolobus solfataricus</name>
    <dbReference type="NCBI Taxonomy" id="273057"/>
    <lineage>
        <taxon>Archaea</taxon>
        <taxon>Thermoproteota</taxon>
        <taxon>Thermoprotei</taxon>
        <taxon>Sulfolobales</taxon>
        <taxon>Sulfolobaceae</taxon>
        <taxon>Saccharolobus</taxon>
    </lineage>
</organism>
<dbReference type="EMBL" id="Y18930">
    <property type="protein sequence ID" value="CAB57592.1"/>
    <property type="molecule type" value="Genomic_DNA"/>
</dbReference>
<dbReference type="EMBL" id="AE006641">
    <property type="protein sequence ID" value="AAK41012.1"/>
    <property type="molecule type" value="Genomic_DNA"/>
</dbReference>
<dbReference type="PIR" id="E90219">
    <property type="entry name" value="E90219"/>
</dbReference>
<dbReference type="RefSeq" id="WP_009991275.1">
    <property type="nucleotide sequence ID" value="NC_002754.1"/>
</dbReference>
<dbReference type="PDB" id="9FHL">
    <property type="method" value="EM"/>
    <property type="resolution" value="2.50 A"/>
    <property type="chains" value="Z=1-229"/>
</dbReference>
<dbReference type="PDB" id="9FRA">
    <property type="method" value="EM"/>
    <property type="resolution" value="2.80 A"/>
    <property type="chains" value="Z=1-229"/>
</dbReference>
<dbReference type="PDB" id="9FRK">
    <property type="method" value="EM"/>
    <property type="resolution" value="3.00 A"/>
    <property type="chains" value="Z=1-229"/>
</dbReference>
<dbReference type="PDB" id="9FRL">
    <property type="method" value="EM"/>
    <property type="resolution" value="2.97 A"/>
    <property type="chains" value="Z=1-229"/>
</dbReference>
<dbReference type="PDB" id="9FS6">
    <property type="method" value="EM"/>
    <property type="resolution" value="2.90 A"/>
    <property type="chains" value="Z=1-229"/>
</dbReference>
<dbReference type="PDB" id="9FS8">
    <property type="method" value="EM"/>
    <property type="resolution" value="3.70 A"/>
    <property type="chains" value="Z=1-229"/>
</dbReference>
<dbReference type="PDB" id="9FSF">
    <property type="method" value="EM"/>
    <property type="resolution" value="2.80 A"/>
    <property type="chains" value="Z=1-229"/>
</dbReference>
<dbReference type="PDB" id="9FY0">
    <property type="method" value="EM"/>
    <property type="resolution" value="2.90 A"/>
    <property type="chains" value="Z=1-229"/>
</dbReference>
<dbReference type="PDBsum" id="9FHL"/>
<dbReference type="PDBsum" id="9FRA"/>
<dbReference type="PDBsum" id="9FRK"/>
<dbReference type="PDBsum" id="9FRL"/>
<dbReference type="PDBsum" id="9FS6"/>
<dbReference type="PDBsum" id="9FS8"/>
<dbReference type="PDBsum" id="9FSF"/>
<dbReference type="PDBsum" id="9FY0"/>
<dbReference type="EMDB" id="EMD-50445"/>
<dbReference type="EMDB" id="EMD-50709"/>
<dbReference type="EMDB" id="EMD-50716"/>
<dbReference type="EMDB" id="EMD-50717"/>
<dbReference type="EMDB" id="EMD-50724"/>
<dbReference type="EMDB" id="EMD-50725"/>
<dbReference type="EMDB" id="EMD-50727"/>
<dbReference type="EMDB" id="EMD-50854"/>
<dbReference type="SMR" id="Q9UXA0"/>
<dbReference type="FunCoup" id="Q9UXA0">
    <property type="interactions" value="249"/>
</dbReference>
<dbReference type="STRING" id="273057.SSO0712"/>
<dbReference type="PaxDb" id="273057-SSO0712"/>
<dbReference type="EnsemblBacteria" id="AAK41012">
    <property type="protein sequence ID" value="AAK41012"/>
    <property type="gene ID" value="SSO0712"/>
</dbReference>
<dbReference type="KEGG" id="sso:SSO0712"/>
<dbReference type="PATRIC" id="fig|273057.12.peg.712"/>
<dbReference type="eggNOG" id="arCOG04097">
    <property type="taxonomic scope" value="Archaea"/>
</dbReference>
<dbReference type="HOGENOM" id="CLU_058591_1_1_2"/>
<dbReference type="InParanoid" id="Q9UXA0"/>
<dbReference type="PhylomeDB" id="Q9UXA0"/>
<dbReference type="Proteomes" id="UP000001974">
    <property type="component" value="Chromosome"/>
</dbReference>
<dbReference type="GO" id="GO:0022627">
    <property type="term" value="C:cytosolic small ribosomal subunit"/>
    <property type="evidence" value="ECO:0000318"/>
    <property type="project" value="GO_Central"/>
</dbReference>
<dbReference type="GO" id="GO:0019843">
    <property type="term" value="F:rRNA binding"/>
    <property type="evidence" value="ECO:0007669"/>
    <property type="project" value="UniProtKB-UniRule"/>
</dbReference>
<dbReference type="GO" id="GO:0003735">
    <property type="term" value="F:structural constituent of ribosome"/>
    <property type="evidence" value="ECO:0000318"/>
    <property type="project" value="GO_Central"/>
</dbReference>
<dbReference type="GO" id="GO:0006412">
    <property type="term" value="P:translation"/>
    <property type="evidence" value="ECO:0007669"/>
    <property type="project" value="UniProtKB-UniRule"/>
</dbReference>
<dbReference type="CDD" id="cd02411">
    <property type="entry name" value="KH-II_30S_S3_arch"/>
    <property type="match status" value="1"/>
</dbReference>
<dbReference type="FunFam" id="3.30.300.20:FF:000001">
    <property type="entry name" value="30S ribosomal protein S3"/>
    <property type="match status" value="1"/>
</dbReference>
<dbReference type="Gene3D" id="3.30.300.20">
    <property type="match status" value="1"/>
</dbReference>
<dbReference type="Gene3D" id="3.30.1140.32">
    <property type="entry name" value="Ribosomal protein S3, C-terminal domain"/>
    <property type="match status" value="1"/>
</dbReference>
<dbReference type="HAMAP" id="MF_01309_A">
    <property type="entry name" value="Ribosomal_uS3_A"/>
    <property type="match status" value="1"/>
</dbReference>
<dbReference type="InterPro" id="IPR004087">
    <property type="entry name" value="KH_dom"/>
</dbReference>
<dbReference type="InterPro" id="IPR015946">
    <property type="entry name" value="KH_dom-like_a/b"/>
</dbReference>
<dbReference type="InterPro" id="IPR004044">
    <property type="entry name" value="KH_dom_type_2"/>
</dbReference>
<dbReference type="InterPro" id="IPR009019">
    <property type="entry name" value="KH_sf_prok-type"/>
</dbReference>
<dbReference type="InterPro" id="IPR036419">
    <property type="entry name" value="Ribosomal_S3_C_sf"/>
</dbReference>
<dbReference type="InterPro" id="IPR027488">
    <property type="entry name" value="Ribosomal_uS3_arc"/>
</dbReference>
<dbReference type="InterPro" id="IPR001351">
    <property type="entry name" value="Ribosomal_uS3_C"/>
</dbReference>
<dbReference type="InterPro" id="IPR018280">
    <property type="entry name" value="Ribosomal_uS3_CS"/>
</dbReference>
<dbReference type="InterPro" id="IPR005703">
    <property type="entry name" value="Ribosomal_uS3_euk/arc"/>
</dbReference>
<dbReference type="NCBIfam" id="NF003219">
    <property type="entry name" value="PRK04191.1"/>
    <property type="match status" value="1"/>
</dbReference>
<dbReference type="NCBIfam" id="TIGR01008">
    <property type="entry name" value="uS3_euk_arch"/>
    <property type="match status" value="1"/>
</dbReference>
<dbReference type="PANTHER" id="PTHR11760">
    <property type="entry name" value="30S/40S RIBOSOMAL PROTEIN S3"/>
    <property type="match status" value="1"/>
</dbReference>
<dbReference type="PANTHER" id="PTHR11760:SF32">
    <property type="entry name" value="SMALL RIBOSOMAL SUBUNIT PROTEIN US3"/>
    <property type="match status" value="1"/>
</dbReference>
<dbReference type="Pfam" id="PF07650">
    <property type="entry name" value="KH_2"/>
    <property type="match status" value="1"/>
</dbReference>
<dbReference type="Pfam" id="PF00189">
    <property type="entry name" value="Ribosomal_S3_C"/>
    <property type="match status" value="1"/>
</dbReference>
<dbReference type="SMART" id="SM00322">
    <property type="entry name" value="KH"/>
    <property type="match status" value="1"/>
</dbReference>
<dbReference type="SUPFAM" id="SSF54814">
    <property type="entry name" value="Prokaryotic type KH domain (KH-domain type II)"/>
    <property type="match status" value="1"/>
</dbReference>
<dbReference type="SUPFAM" id="SSF54821">
    <property type="entry name" value="Ribosomal protein S3 C-terminal domain"/>
    <property type="match status" value="1"/>
</dbReference>
<dbReference type="PROSITE" id="PS50823">
    <property type="entry name" value="KH_TYPE_2"/>
    <property type="match status" value="1"/>
</dbReference>
<dbReference type="PROSITE" id="PS00548">
    <property type="entry name" value="RIBOSOMAL_S3"/>
    <property type="match status" value="1"/>
</dbReference>
<gene>
    <name evidence="1" type="primary">rps3</name>
    <name evidence="1" type="synonym">rps3Ab</name>
    <name type="ordered locus">SSO0712</name>
    <name type="ORF">C10_019</name>
</gene>
<proteinExistence type="evidence at protein level"/>
<reference key="1">
    <citation type="journal article" date="2000" name="Genome">
        <title>Gene content and organization of a 281-kbp contig from the genome of the extremely thermophilic archaeon, Sulfolobus solfataricus P2.</title>
        <authorList>
            <person name="Charlebois R.L."/>
            <person name="Singh R.K."/>
            <person name="Chan-Weiher C.C.-Y."/>
            <person name="Allard G."/>
            <person name="Chow C."/>
            <person name="Confalonieri F."/>
            <person name="Curtis B."/>
            <person name="Duguet M."/>
            <person name="Erauso G."/>
            <person name="Faguy D."/>
            <person name="Gaasterland T."/>
            <person name="Garrett R.A."/>
            <person name="Gordon P."/>
            <person name="Jeffries A.C."/>
            <person name="Kozera C."/>
            <person name="Kushwaha N."/>
            <person name="Lafleur E."/>
            <person name="Medina N."/>
            <person name="Peng X."/>
            <person name="Penny S.L."/>
            <person name="She Q."/>
            <person name="St Jean A."/>
            <person name="van der Oost J."/>
            <person name="Young F."/>
            <person name="Zivanovic Y."/>
            <person name="Doolittle W.F."/>
            <person name="Ragan M.A."/>
            <person name="Sensen C.W."/>
        </authorList>
    </citation>
    <scope>NUCLEOTIDE SEQUENCE [LARGE SCALE GENOMIC DNA]</scope>
    <source>
        <strain>ATCC 35092 / DSM 1617 / JCM 11322 / P2</strain>
    </source>
</reference>
<reference key="2">
    <citation type="journal article" date="2001" name="Proc. Natl. Acad. Sci. U.S.A.">
        <title>The complete genome of the crenarchaeon Sulfolobus solfataricus P2.</title>
        <authorList>
            <person name="She Q."/>
            <person name="Singh R.K."/>
            <person name="Confalonieri F."/>
            <person name="Zivanovic Y."/>
            <person name="Allard G."/>
            <person name="Awayez M.J."/>
            <person name="Chan-Weiher C.C.-Y."/>
            <person name="Clausen I.G."/>
            <person name="Curtis B.A."/>
            <person name="De Moors A."/>
            <person name="Erauso G."/>
            <person name="Fletcher C."/>
            <person name="Gordon P.M.K."/>
            <person name="Heikamp-de Jong I."/>
            <person name="Jeffries A.C."/>
            <person name="Kozera C.J."/>
            <person name="Medina N."/>
            <person name="Peng X."/>
            <person name="Thi-Ngoc H.P."/>
            <person name="Redder P."/>
            <person name="Schenk M.E."/>
            <person name="Theriault C."/>
            <person name="Tolstrup N."/>
            <person name="Charlebois R.L."/>
            <person name="Doolittle W.F."/>
            <person name="Duguet M."/>
            <person name="Gaasterland T."/>
            <person name="Garrett R.A."/>
            <person name="Ragan M.A."/>
            <person name="Sensen C.W."/>
            <person name="Van der Oost J."/>
        </authorList>
    </citation>
    <scope>NUCLEOTIDE SEQUENCE [LARGE SCALE GENOMIC DNA]</scope>
    <source>
        <strain>ATCC 35092 / DSM 1617 / JCM 11322 / P2</strain>
    </source>
</reference>
<name>RS3_SACS2</name>